<name>BGLJ_ASPFU</name>
<organism>
    <name type="scientific">Aspergillus fumigatus (strain ATCC MYA-4609 / CBS 101355 / FGSC A1100 / Af293)</name>
    <name type="common">Neosartorya fumigata</name>
    <dbReference type="NCBI Taxonomy" id="330879"/>
    <lineage>
        <taxon>Eukaryota</taxon>
        <taxon>Fungi</taxon>
        <taxon>Dikarya</taxon>
        <taxon>Ascomycota</taxon>
        <taxon>Pezizomycotina</taxon>
        <taxon>Eurotiomycetes</taxon>
        <taxon>Eurotiomycetidae</taxon>
        <taxon>Eurotiales</taxon>
        <taxon>Aspergillaceae</taxon>
        <taxon>Aspergillus</taxon>
        <taxon>Aspergillus subgen. Fumigati</taxon>
    </lineage>
</organism>
<sequence length="865" mass="92992">MGSIDTVGMGQRAIDQIISELSLNEKVALLSGVDAWHTFAIPRLGIPSIRTTDGPNGARGTRYFNGVPSACLPCGTALGATFDRDLIFSLGQLLAAECRAKGAHVLLGPTINIQRGPLGGRGFESFSEDPVLSGLAAASYCSGVQDGGVVPTLKHLVCNDQEHERVAVSALVTPRALREIYLLPFQLAIQGARPGAVMTSYNKVNGLHASENPGLIRDILRGEWGYEGAVISDWFGTYSVADAVNAGLDLEMPGPTRFRGPALMHALTSNKVSEKTLNERVRKVLELVQLASRAGVPEYAPERKLNRPEDRALLRRAAGESVVLLKNDKNDSTNSPILPLDREKTTLVIGPNADLAAYCGGGSASLLAYYTVTPRQGIADKCGAEQVVFSQGCYGHKELPLLGEHLRTIETGQPGYTFRVYTEPPPASGSFKGSDSRTPVDELHMTNSSAFLMDYSHPQISGDTYYATLEGTFEPPESGVYEFGLTVAGTGLLYIDGVLVVDNKTVQRAGTSFFGIGTVEERGERYLEAGKKHHVFVEFGTAPTSNLQHHHGVVSFGPGGLRLGGCRKLDTDTAIQQAVQSAAQADQVVVCVGLSGDWESEGFDRPHMDLPPGTDELVNAVLAVQPNAVIVVQSGTPVTMPWADKAKALLQAWYGGNEAGNGIADVLFGDVNPSAKLPLTFPRELAQNPSYLSYRSERGRVLYSEDIYVGYRYYDTTGQPPLFRFGHGLSYSTFHLRDLTVRETAPYAANIKESSLRVSVTVSNTSARPGAEVVLVYVRPPAAACSVGRPVRELKGYEKVMLQPGETREVSITIPLGLATSFWDEGCDAWLSEKGLYFVEAVGTGEGNTLVAPLTVQVSRVWNGL</sequence>
<proteinExistence type="inferred from homology"/>
<gene>
    <name type="primary">bglJ</name>
    <name type="ORF">AFUA_6G11910</name>
</gene>
<protein>
    <recommendedName>
        <fullName>Probable beta-glucosidase J</fullName>
        <ecNumber>3.2.1.21</ecNumber>
    </recommendedName>
    <alternativeName>
        <fullName>Beta-D-glucoside glucohydrolase J</fullName>
    </alternativeName>
    <alternativeName>
        <fullName>Cellobiase J</fullName>
    </alternativeName>
    <alternativeName>
        <fullName>Gentiobiase J</fullName>
    </alternativeName>
</protein>
<comment type="function">
    <text evidence="1">Beta-glucosidases are one of a number of cellulolytic enzymes involved in the degradation of cellulosic biomass. Catalyzes the last step releasing glucose from the inhibitory cellobiose (By similarity).</text>
</comment>
<comment type="catalytic activity">
    <reaction>
        <text>Hydrolysis of terminal, non-reducing beta-D-glucosyl residues with release of beta-D-glucose.</text>
        <dbReference type="EC" id="3.2.1.21"/>
    </reaction>
</comment>
<comment type="pathway">
    <text>Glycan metabolism; cellulose degradation.</text>
</comment>
<comment type="subcellular location">
    <subcellularLocation>
        <location evidence="1">Secreted</location>
    </subcellularLocation>
</comment>
<comment type="similarity">
    <text evidence="4">Belongs to the glycosyl hydrolase 3 family.</text>
</comment>
<comment type="sequence caution" evidence="4">
    <conflict type="erroneous gene model prediction">
        <sequence resource="EMBL-CDS" id="EAL89033"/>
    </conflict>
</comment>
<keyword id="KW-0119">Carbohydrate metabolism</keyword>
<keyword id="KW-0136">Cellulose degradation</keyword>
<keyword id="KW-0325">Glycoprotein</keyword>
<keyword id="KW-0326">Glycosidase</keyword>
<keyword id="KW-0378">Hydrolase</keyword>
<keyword id="KW-0624">Polysaccharide degradation</keyword>
<keyword id="KW-1185">Reference proteome</keyword>
<keyword id="KW-0964">Secreted</keyword>
<accession>Q4WLY1</accession>
<dbReference type="EC" id="3.2.1.21"/>
<dbReference type="EMBL" id="AAHF01000006">
    <property type="protein sequence ID" value="EAL89033.1"/>
    <property type="status" value="ALT_SEQ"/>
    <property type="molecule type" value="Genomic_DNA"/>
</dbReference>
<dbReference type="RefSeq" id="XP_751071.1">
    <property type="nucleotide sequence ID" value="XM_745978.1"/>
</dbReference>
<dbReference type="SMR" id="Q4WLY1"/>
<dbReference type="STRING" id="330879.Q4WLY1"/>
<dbReference type="GlyCosmos" id="Q4WLY1">
    <property type="glycosylation" value="4 sites, No reported glycans"/>
</dbReference>
<dbReference type="GeneID" id="3508376"/>
<dbReference type="KEGG" id="afm:AFUA_6G11910"/>
<dbReference type="eggNOG" id="ENOG502QR4D">
    <property type="taxonomic scope" value="Eukaryota"/>
</dbReference>
<dbReference type="HOGENOM" id="CLU_004542_4_0_1"/>
<dbReference type="InParanoid" id="Q4WLY1"/>
<dbReference type="OrthoDB" id="47059at2759"/>
<dbReference type="UniPathway" id="UPA00696"/>
<dbReference type="Proteomes" id="UP000002530">
    <property type="component" value="Chromosome 6"/>
</dbReference>
<dbReference type="GO" id="GO:0005576">
    <property type="term" value="C:extracellular region"/>
    <property type="evidence" value="ECO:0007669"/>
    <property type="project" value="UniProtKB-SubCell"/>
</dbReference>
<dbReference type="GO" id="GO:0008422">
    <property type="term" value="F:beta-glucosidase activity"/>
    <property type="evidence" value="ECO:0000318"/>
    <property type="project" value="GO_Central"/>
</dbReference>
<dbReference type="GO" id="GO:0030245">
    <property type="term" value="P:cellulose catabolic process"/>
    <property type="evidence" value="ECO:0007669"/>
    <property type="project" value="UniProtKB-UniPathway"/>
</dbReference>
<dbReference type="GO" id="GO:0009251">
    <property type="term" value="P:glucan catabolic process"/>
    <property type="evidence" value="ECO:0000318"/>
    <property type="project" value="GO_Central"/>
</dbReference>
<dbReference type="FunFam" id="3.20.20.300:FF:000006">
    <property type="entry name" value="Beta-glucosidase H"/>
    <property type="match status" value="1"/>
</dbReference>
<dbReference type="FunFam" id="2.60.40.10:FF:000495">
    <property type="entry name" value="Periplasmic beta-glucosidase"/>
    <property type="match status" value="1"/>
</dbReference>
<dbReference type="FunFam" id="2.60.120.260:FF:000119">
    <property type="entry name" value="Probable beta-glucosidase I"/>
    <property type="match status" value="1"/>
</dbReference>
<dbReference type="Gene3D" id="2.60.120.260">
    <property type="entry name" value="Galactose-binding domain-like"/>
    <property type="match status" value="1"/>
</dbReference>
<dbReference type="Gene3D" id="3.40.50.1700">
    <property type="entry name" value="Glycoside hydrolase family 3 C-terminal domain"/>
    <property type="match status" value="1"/>
</dbReference>
<dbReference type="Gene3D" id="3.20.20.300">
    <property type="entry name" value="Glycoside hydrolase, family 3, N-terminal domain"/>
    <property type="match status" value="1"/>
</dbReference>
<dbReference type="Gene3D" id="2.60.40.10">
    <property type="entry name" value="Immunoglobulins"/>
    <property type="match status" value="1"/>
</dbReference>
<dbReference type="InterPro" id="IPR050288">
    <property type="entry name" value="Cellulose_deg_GH3"/>
</dbReference>
<dbReference type="InterPro" id="IPR026891">
    <property type="entry name" value="Fn3-like"/>
</dbReference>
<dbReference type="InterPro" id="IPR002772">
    <property type="entry name" value="Glyco_hydro_3_C"/>
</dbReference>
<dbReference type="InterPro" id="IPR036881">
    <property type="entry name" value="Glyco_hydro_3_C_sf"/>
</dbReference>
<dbReference type="InterPro" id="IPR001764">
    <property type="entry name" value="Glyco_hydro_3_N"/>
</dbReference>
<dbReference type="InterPro" id="IPR036962">
    <property type="entry name" value="Glyco_hydro_3_N_sf"/>
</dbReference>
<dbReference type="InterPro" id="IPR017853">
    <property type="entry name" value="Glycoside_hydrolase_SF"/>
</dbReference>
<dbReference type="InterPro" id="IPR013783">
    <property type="entry name" value="Ig-like_fold"/>
</dbReference>
<dbReference type="InterPro" id="IPR037524">
    <property type="entry name" value="PA14/GLEYA"/>
</dbReference>
<dbReference type="InterPro" id="IPR011658">
    <property type="entry name" value="PA14_dom"/>
</dbReference>
<dbReference type="PANTHER" id="PTHR42715">
    <property type="entry name" value="BETA-GLUCOSIDASE"/>
    <property type="match status" value="1"/>
</dbReference>
<dbReference type="PANTHER" id="PTHR42715:SF16">
    <property type="entry name" value="BETA-GLUCOSIDASE J-RELATED"/>
    <property type="match status" value="1"/>
</dbReference>
<dbReference type="Pfam" id="PF14310">
    <property type="entry name" value="Fn3-like"/>
    <property type="match status" value="1"/>
</dbReference>
<dbReference type="Pfam" id="PF00933">
    <property type="entry name" value="Glyco_hydro_3"/>
    <property type="match status" value="1"/>
</dbReference>
<dbReference type="Pfam" id="PF01915">
    <property type="entry name" value="Glyco_hydro_3_C"/>
    <property type="match status" value="1"/>
</dbReference>
<dbReference type="Pfam" id="PF07691">
    <property type="entry name" value="PA14"/>
    <property type="match status" value="1"/>
</dbReference>
<dbReference type="PRINTS" id="PR00133">
    <property type="entry name" value="GLHYDRLASE3"/>
</dbReference>
<dbReference type="SMART" id="SM01217">
    <property type="entry name" value="Fn3_like"/>
    <property type="match status" value="1"/>
</dbReference>
<dbReference type="SMART" id="SM00758">
    <property type="entry name" value="PA14"/>
    <property type="match status" value="1"/>
</dbReference>
<dbReference type="SUPFAM" id="SSF51445">
    <property type="entry name" value="(Trans)glycosidases"/>
    <property type="match status" value="1"/>
</dbReference>
<dbReference type="SUPFAM" id="SSF52279">
    <property type="entry name" value="Beta-D-glucan exohydrolase, C-terminal domain"/>
    <property type="match status" value="1"/>
</dbReference>
<dbReference type="PROSITE" id="PS51820">
    <property type="entry name" value="PA14"/>
    <property type="match status" value="1"/>
</dbReference>
<feature type="chain" id="PRO_0000394893" description="Probable beta-glucosidase J">
    <location>
        <begin position="1"/>
        <end position="865"/>
    </location>
</feature>
<feature type="domain" description="PA14" evidence="3">
    <location>
        <begin position="411"/>
        <end position="579"/>
    </location>
</feature>
<feature type="active site" evidence="1">
    <location>
        <position position="233"/>
    </location>
</feature>
<feature type="glycosylation site" description="N-linked (GlcNAc...) asparagine" evidence="2">
    <location>
        <position position="330"/>
    </location>
</feature>
<feature type="glycosylation site" description="N-linked (GlcNAc...) asparagine" evidence="2">
    <location>
        <position position="447"/>
    </location>
</feature>
<feature type="glycosylation site" description="N-linked (GlcNAc...) asparagine" evidence="2">
    <location>
        <position position="503"/>
    </location>
</feature>
<feature type="glycosylation site" description="N-linked (GlcNAc...) asparagine" evidence="2">
    <location>
        <position position="764"/>
    </location>
</feature>
<reference key="1">
    <citation type="journal article" date="2005" name="Nature">
        <title>Genomic sequence of the pathogenic and allergenic filamentous fungus Aspergillus fumigatus.</title>
        <authorList>
            <person name="Nierman W.C."/>
            <person name="Pain A."/>
            <person name="Anderson M.J."/>
            <person name="Wortman J.R."/>
            <person name="Kim H.S."/>
            <person name="Arroyo J."/>
            <person name="Berriman M."/>
            <person name="Abe K."/>
            <person name="Archer D.B."/>
            <person name="Bermejo C."/>
            <person name="Bennett J.W."/>
            <person name="Bowyer P."/>
            <person name="Chen D."/>
            <person name="Collins M."/>
            <person name="Coulsen R."/>
            <person name="Davies R."/>
            <person name="Dyer P.S."/>
            <person name="Farman M.L."/>
            <person name="Fedorova N."/>
            <person name="Fedorova N.D."/>
            <person name="Feldblyum T.V."/>
            <person name="Fischer R."/>
            <person name="Fosker N."/>
            <person name="Fraser A."/>
            <person name="Garcia J.L."/>
            <person name="Garcia M.J."/>
            <person name="Goble A."/>
            <person name="Goldman G.H."/>
            <person name="Gomi K."/>
            <person name="Griffith-Jones S."/>
            <person name="Gwilliam R."/>
            <person name="Haas B.J."/>
            <person name="Haas H."/>
            <person name="Harris D.E."/>
            <person name="Horiuchi H."/>
            <person name="Huang J."/>
            <person name="Humphray S."/>
            <person name="Jimenez J."/>
            <person name="Keller N."/>
            <person name="Khouri H."/>
            <person name="Kitamoto K."/>
            <person name="Kobayashi T."/>
            <person name="Konzack S."/>
            <person name="Kulkarni R."/>
            <person name="Kumagai T."/>
            <person name="Lafton A."/>
            <person name="Latge J.-P."/>
            <person name="Li W."/>
            <person name="Lord A."/>
            <person name="Lu C."/>
            <person name="Majoros W.H."/>
            <person name="May G.S."/>
            <person name="Miller B.L."/>
            <person name="Mohamoud Y."/>
            <person name="Molina M."/>
            <person name="Monod M."/>
            <person name="Mouyna I."/>
            <person name="Mulligan S."/>
            <person name="Murphy L.D."/>
            <person name="O'Neil S."/>
            <person name="Paulsen I."/>
            <person name="Penalva M.A."/>
            <person name="Pertea M."/>
            <person name="Price C."/>
            <person name="Pritchard B.L."/>
            <person name="Quail M.A."/>
            <person name="Rabbinowitsch E."/>
            <person name="Rawlins N."/>
            <person name="Rajandream M.A."/>
            <person name="Reichard U."/>
            <person name="Renauld H."/>
            <person name="Robson G.D."/>
            <person name="Rodriguez de Cordoba S."/>
            <person name="Rodriguez-Pena J.M."/>
            <person name="Ronning C.M."/>
            <person name="Rutter S."/>
            <person name="Salzberg S.L."/>
            <person name="Sanchez M."/>
            <person name="Sanchez-Ferrero J.C."/>
            <person name="Saunders D."/>
            <person name="Seeger K."/>
            <person name="Squares R."/>
            <person name="Squares S."/>
            <person name="Takeuchi M."/>
            <person name="Tekaia F."/>
            <person name="Turner G."/>
            <person name="Vazquez de Aldana C.R."/>
            <person name="Weidman J."/>
            <person name="White O."/>
            <person name="Woodward J.R."/>
            <person name="Yu J.-H."/>
            <person name="Fraser C.M."/>
            <person name="Galagan J.E."/>
            <person name="Asai K."/>
            <person name="Machida M."/>
            <person name="Hall N."/>
            <person name="Barrell B.G."/>
            <person name="Denning D.W."/>
        </authorList>
    </citation>
    <scope>NUCLEOTIDE SEQUENCE [LARGE SCALE GENOMIC DNA]</scope>
    <source>
        <strain>ATCC MYA-4609 / CBS 101355 / FGSC A1100 / Af293</strain>
    </source>
</reference>
<evidence type="ECO:0000250" key="1"/>
<evidence type="ECO:0000255" key="2"/>
<evidence type="ECO:0000255" key="3">
    <source>
        <dbReference type="PROSITE-ProRule" id="PRU01164"/>
    </source>
</evidence>
<evidence type="ECO:0000305" key="4"/>